<protein>
    <recommendedName>
        <fullName evidence="1">Large ribosomal subunit protein uL1</fullName>
    </recommendedName>
    <alternativeName>
        <fullName evidence="2">50S ribosomal protein L1</fullName>
    </alternativeName>
</protein>
<accession>Q1R0I5</accession>
<reference key="1">
    <citation type="journal article" date="2011" name="Stand. Genomic Sci.">
        <title>Complete genome sequence of the halophilic and highly halotolerant Chromohalobacter salexigens type strain (1H11(T)).</title>
        <authorList>
            <person name="Copeland A."/>
            <person name="O'Connor K."/>
            <person name="Lucas S."/>
            <person name="Lapidus A."/>
            <person name="Berry K.W."/>
            <person name="Detter J.C."/>
            <person name="Del Rio T.G."/>
            <person name="Hammon N."/>
            <person name="Dalin E."/>
            <person name="Tice H."/>
            <person name="Pitluck S."/>
            <person name="Bruce D."/>
            <person name="Goodwin L."/>
            <person name="Han C."/>
            <person name="Tapia R."/>
            <person name="Saunders E."/>
            <person name="Schmutz J."/>
            <person name="Brettin T."/>
            <person name="Larimer F."/>
            <person name="Land M."/>
            <person name="Hauser L."/>
            <person name="Vargas C."/>
            <person name="Nieto J.J."/>
            <person name="Kyrpides N.C."/>
            <person name="Ivanova N."/>
            <person name="Goker M."/>
            <person name="Klenk H.P."/>
            <person name="Csonka L.N."/>
            <person name="Woyke T."/>
        </authorList>
    </citation>
    <scope>NUCLEOTIDE SEQUENCE [LARGE SCALE GENOMIC DNA]</scope>
    <source>
        <strain>ATCC BAA-138 / DSM 3043 / CIP 106854 / NCIMB 13768 / 1H11</strain>
    </source>
</reference>
<sequence>MAKLTKRAQMLREKVDTSKVYNLEDAVALLSEVSTVKFKESVEVSINLGVDPRKSDQVVRGATVMPNGTGKDARVAVFAQGAAADAAKEAGADVVGMEDLAEEVKKGNLDFDVVVAAPDAMRVVGQLGQILGPRGLMPNPKVGTVTPDVATAVKNAKAGQVRFRTDKNGIIHAAIGKVDFDASAIKGNLDALVGDLKRLKPSTSKGVYFKKITLSTTMGPGLTVDHSAYV</sequence>
<feature type="chain" id="PRO_0000307987" description="Large ribosomal subunit protein uL1">
    <location>
        <begin position="1"/>
        <end position="230"/>
    </location>
</feature>
<proteinExistence type="inferred from homology"/>
<comment type="function">
    <text evidence="1">Binds directly to 23S rRNA. The L1 stalk is quite mobile in the ribosome, and is involved in E site tRNA release.</text>
</comment>
<comment type="function">
    <text evidence="1">Protein L1 is also a translational repressor protein, it controls the translation of the L11 operon by binding to its mRNA.</text>
</comment>
<comment type="subunit">
    <text evidence="1">Part of the 50S ribosomal subunit.</text>
</comment>
<comment type="similarity">
    <text evidence="1">Belongs to the universal ribosomal protein uL1 family.</text>
</comment>
<name>RL1_CHRSD</name>
<dbReference type="EMBL" id="CP000285">
    <property type="protein sequence ID" value="ABE57773.1"/>
    <property type="molecule type" value="Genomic_DNA"/>
</dbReference>
<dbReference type="RefSeq" id="WP_011505719.1">
    <property type="nucleotide sequence ID" value="NC_007963.1"/>
</dbReference>
<dbReference type="SMR" id="Q1R0I5"/>
<dbReference type="STRING" id="290398.Csal_0411"/>
<dbReference type="GeneID" id="95333164"/>
<dbReference type="KEGG" id="csa:Csal_0411"/>
<dbReference type="eggNOG" id="COG0081">
    <property type="taxonomic scope" value="Bacteria"/>
</dbReference>
<dbReference type="HOGENOM" id="CLU_062853_0_0_6"/>
<dbReference type="OrthoDB" id="9803740at2"/>
<dbReference type="Proteomes" id="UP000000239">
    <property type="component" value="Chromosome"/>
</dbReference>
<dbReference type="GO" id="GO:0022625">
    <property type="term" value="C:cytosolic large ribosomal subunit"/>
    <property type="evidence" value="ECO:0007669"/>
    <property type="project" value="TreeGrafter"/>
</dbReference>
<dbReference type="GO" id="GO:0019843">
    <property type="term" value="F:rRNA binding"/>
    <property type="evidence" value="ECO:0007669"/>
    <property type="project" value="UniProtKB-UniRule"/>
</dbReference>
<dbReference type="GO" id="GO:0003735">
    <property type="term" value="F:structural constituent of ribosome"/>
    <property type="evidence" value="ECO:0007669"/>
    <property type="project" value="InterPro"/>
</dbReference>
<dbReference type="GO" id="GO:0000049">
    <property type="term" value="F:tRNA binding"/>
    <property type="evidence" value="ECO:0007669"/>
    <property type="project" value="UniProtKB-KW"/>
</dbReference>
<dbReference type="GO" id="GO:0006417">
    <property type="term" value="P:regulation of translation"/>
    <property type="evidence" value="ECO:0007669"/>
    <property type="project" value="UniProtKB-KW"/>
</dbReference>
<dbReference type="GO" id="GO:0006412">
    <property type="term" value="P:translation"/>
    <property type="evidence" value="ECO:0007669"/>
    <property type="project" value="UniProtKB-UniRule"/>
</dbReference>
<dbReference type="CDD" id="cd00403">
    <property type="entry name" value="Ribosomal_L1"/>
    <property type="match status" value="1"/>
</dbReference>
<dbReference type="FunFam" id="3.40.50.790:FF:000001">
    <property type="entry name" value="50S ribosomal protein L1"/>
    <property type="match status" value="1"/>
</dbReference>
<dbReference type="Gene3D" id="3.30.190.20">
    <property type="match status" value="1"/>
</dbReference>
<dbReference type="Gene3D" id="3.40.50.790">
    <property type="match status" value="1"/>
</dbReference>
<dbReference type="HAMAP" id="MF_01318_B">
    <property type="entry name" value="Ribosomal_uL1_B"/>
    <property type="match status" value="1"/>
</dbReference>
<dbReference type="InterPro" id="IPR005878">
    <property type="entry name" value="Ribosom_uL1_bac-type"/>
</dbReference>
<dbReference type="InterPro" id="IPR002143">
    <property type="entry name" value="Ribosomal_uL1"/>
</dbReference>
<dbReference type="InterPro" id="IPR023674">
    <property type="entry name" value="Ribosomal_uL1-like"/>
</dbReference>
<dbReference type="InterPro" id="IPR028364">
    <property type="entry name" value="Ribosomal_uL1/biogenesis"/>
</dbReference>
<dbReference type="InterPro" id="IPR016095">
    <property type="entry name" value="Ribosomal_uL1_3-a/b-sand"/>
</dbReference>
<dbReference type="InterPro" id="IPR023673">
    <property type="entry name" value="Ribosomal_uL1_CS"/>
</dbReference>
<dbReference type="NCBIfam" id="TIGR01169">
    <property type="entry name" value="rplA_bact"/>
    <property type="match status" value="1"/>
</dbReference>
<dbReference type="PANTHER" id="PTHR36427">
    <property type="entry name" value="54S RIBOSOMAL PROTEIN L1, MITOCHONDRIAL"/>
    <property type="match status" value="1"/>
</dbReference>
<dbReference type="PANTHER" id="PTHR36427:SF3">
    <property type="entry name" value="LARGE RIBOSOMAL SUBUNIT PROTEIN UL1M"/>
    <property type="match status" value="1"/>
</dbReference>
<dbReference type="Pfam" id="PF00687">
    <property type="entry name" value="Ribosomal_L1"/>
    <property type="match status" value="1"/>
</dbReference>
<dbReference type="PIRSF" id="PIRSF002155">
    <property type="entry name" value="Ribosomal_L1"/>
    <property type="match status" value="1"/>
</dbReference>
<dbReference type="SUPFAM" id="SSF56808">
    <property type="entry name" value="Ribosomal protein L1"/>
    <property type="match status" value="1"/>
</dbReference>
<dbReference type="PROSITE" id="PS01199">
    <property type="entry name" value="RIBOSOMAL_L1"/>
    <property type="match status" value="1"/>
</dbReference>
<evidence type="ECO:0000255" key="1">
    <source>
        <dbReference type="HAMAP-Rule" id="MF_01318"/>
    </source>
</evidence>
<evidence type="ECO:0000305" key="2"/>
<organism>
    <name type="scientific">Chromohalobacter salexigens (strain ATCC BAA-138 / DSM 3043 / CIP 106854 / NCIMB 13768 / 1H11)</name>
    <dbReference type="NCBI Taxonomy" id="290398"/>
    <lineage>
        <taxon>Bacteria</taxon>
        <taxon>Pseudomonadati</taxon>
        <taxon>Pseudomonadota</taxon>
        <taxon>Gammaproteobacteria</taxon>
        <taxon>Oceanospirillales</taxon>
        <taxon>Halomonadaceae</taxon>
        <taxon>Chromohalobacter</taxon>
    </lineage>
</organism>
<gene>
    <name evidence="1" type="primary">rplA</name>
    <name type="ordered locus">Csal_0411</name>
</gene>
<keyword id="KW-1185">Reference proteome</keyword>
<keyword id="KW-0678">Repressor</keyword>
<keyword id="KW-0687">Ribonucleoprotein</keyword>
<keyword id="KW-0689">Ribosomal protein</keyword>
<keyword id="KW-0694">RNA-binding</keyword>
<keyword id="KW-0699">rRNA-binding</keyword>
<keyword id="KW-0810">Translation regulation</keyword>
<keyword id="KW-0820">tRNA-binding</keyword>